<name>FADA_CROS8</name>
<protein>
    <recommendedName>
        <fullName evidence="1">3-ketoacyl-CoA thiolase</fullName>
        <ecNumber evidence="1">2.3.1.16</ecNumber>
    </recommendedName>
    <alternativeName>
        <fullName evidence="1">Acetyl-CoA acyltransferase</fullName>
    </alternativeName>
    <alternativeName>
        <fullName evidence="1">Beta-ketothiolase</fullName>
    </alternativeName>
    <alternativeName>
        <fullName evidence="1">Fatty acid oxidation complex subunit beta</fullName>
    </alternativeName>
</protein>
<organism>
    <name type="scientific">Cronobacter sakazakii (strain ATCC BAA-894)</name>
    <name type="common">Enterobacter sakazakii</name>
    <dbReference type="NCBI Taxonomy" id="290339"/>
    <lineage>
        <taxon>Bacteria</taxon>
        <taxon>Pseudomonadati</taxon>
        <taxon>Pseudomonadota</taxon>
        <taxon>Gammaproteobacteria</taxon>
        <taxon>Enterobacterales</taxon>
        <taxon>Enterobacteriaceae</taxon>
        <taxon>Cronobacter</taxon>
    </lineage>
</organism>
<sequence>MEKVVIVDAIRTPMGRSKGGAFRQVRAEDLSAHLMRSLLSRNPQLEASAIDDIYWGCVQQTLEQGFNIARNAALLAEIPHSVPAVTVNRLCGSSMQALHDAARMIMTGDASVCLVGGVEHMGHVPMNHGVDFHPGLSRNVAKAAGMMGLTAEMLSRMHGISREMQDAFAARSHQRAWAATQAGHFKQEIIPTSGHDADGVLKRYDFDEVIRPETTAEGLSQLKPAFDPANGTVTAGTSSALSDGAAAMLVMSESRARELGLTPRARIRSMAVVGCDPSIMGYGPVPASKLALKKAGLTASDIDLFEMNEAFAAQILPCIKDLGLMEQIDEKINLNGGAIALGHPLGCSGARISTTLINLMERRDAELGLATMCIGLGQGIATVFERV</sequence>
<comment type="function">
    <text evidence="1">Catalyzes the final step of fatty acid oxidation in which acetyl-CoA is released and the CoA ester of a fatty acid two carbons shorter is formed.</text>
</comment>
<comment type="catalytic activity">
    <reaction evidence="1">
        <text>an acyl-CoA + acetyl-CoA = a 3-oxoacyl-CoA + CoA</text>
        <dbReference type="Rhea" id="RHEA:21564"/>
        <dbReference type="ChEBI" id="CHEBI:57287"/>
        <dbReference type="ChEBI" id="CHEBI:57288"/>
        <dbReference type="ChEBI" id="CHEBI:58342"/>
        <dbReference type="ChEBI" id="CHEBI:90726"/>
        <dbReference type="EC" id="2.3.1.16"/>
    </reaction>
</comment>
<comment type="pathway">
    <text evidence="1">Lipid metabolism; fatty acid beta-oxidation.</text>
</comment>
<comment type="subunit">
    <text evidence="1">Heterotetramer of two alpha chains (FadB) and two beta chains (FadA).</text>
</comment>
<comment type="subcellular location">
    <subcellularLocation>
        <location evidence="1">Cytoplasm</location>
    </subcellularLocation>
</comment>
<comment type="similarity">
    <text evidence="1">Belongs to the thiolase-like superfamily. Thiolase family.</text>
</comment>
<keyword id="KW-0012">Acyltransferase</keyword>
<keyword id="KW-0963">Cytoplasm</keyword>
<keyword id="KW-0276">Fatty acid metabolism</keyword>
<keyword id="KW-0442">Lipid degradation</keyword>
<keyword id="KW-0443">Lipid metabolism</keyword>
<keyword id="KW-1185">Reference proteome</keyword>
<keyword id="KW-0808">Transferase</keyword>
<proteinExistence type="inferred from homology"/>
<gene>
    <name evidence="1" type="primary">fadA</name>
    <name type="ordered locus">ESA_03715</name>
</gene>
<reference key="1">
    <citation type="journal article" date="2010" name="PLoS ONE">
        <title>Genome sequence of Cronobacter sakazakii BAA-894 and comparative genomic hybridization analysis with other Cronobacter species.</title>
        <authorList>
            <person name="Kucerova E."/>
            <person name="Clifton S.W."/>
            <person name="Xia X.Q."/>
            <person name="Long F."/>
            <person name="Porwollik S."/>
            <person name="Fulton L."/>
            <person name="Fronick C."/>
            <person name="Minx P."/>
            <person name="Kyung K."/>
            <person name="Warren W."/>
            <person name="Fulton R."/>
            <person name="Feng D."/>
            <person name="Wollam A."/>
            <person name="Shah N."/>
            <person name="Bhonagiri V."/>
            <person name="Nash W.E."/>
            <person name="Hallsworth-Pepin K."/>
            <person name="Wilson R.K."/>
            <person name="McClelland M."/>
            <person name="Forsythe S.J."/>
        </authorList>
    </citation>
    <scope>NUCLEOTIDE SEQUENCE [LARGE SCALE GENOMIC DNA]</scope>
    <source>
        <strain>ATCC BAA-894</strain>
    </source>
</reference>
<feature type="chain" id="PRO_0000323543" description="3-ketoacyl-CoA thiolase">
    <location>
        <begin position="1"/>
        <end position="387"/>
    </location>
</feature>
<feature type="active site" description="Acyl-thioester intermediate" evidence="1">
    <location>
        <position position="91"/>
    </location>
</feature>
<feature type="active site" description="Proton acceptor" evidence="1">
    <location>
        <position position="343"/>
    </location>
</feature>
<feature type="active site" description="Proton acceptor" evidence="1">
    <location>
        <position position="373"/>
    </location>
</feature>
<accession>A7MQM5</accession>
<dbReference type="EC" id="2.3.1.16" evidence="1"/>
<dbReference type="EMBL" id="CP000783">
    <property type="protein sequence ID" value="ABU78912.1"/>
    <property type="molecule type" value="Genomic_DNA"/>
</dbReference>
<dbReference type="RefSeq" id="WP_004385505.1">
    <property type="nucleotide sequence ID" value="NC_009778.1"/>
</dbReference>
<dbReference type="SMR" id="A7MQM5"/>
<dbReference type="KEGG" id="esa:ESA_03715"/>
<dbReference type="HOGENOM" id="CLU_031026_2_2_6"/>
<dbReference type="UniPathway" id="UPA00659"/>
<dbReference type="Proteomes" id="UP000000260">
    <property type="component" value="Chromosome"/>
</dbReference>
<dbReference type="GO" id="GO:0005737">
    <property type="term" value="C:cytoplasm"/>
    <property type="evidence" value="ECO:0007669"/>
    <property type="project" value="UniProtKB-SubCell"/>
</dbReference>
<dbReference type="GO" id="GO:0003988">
    <property type="term" value="F:acetyl-CoA C-acyltransferase activity"/>
    <property type="evidence" value="ECO:0007669"/>
    <property type="project" value="UniProtKB-UniRule"/>
</dbReference>
<dbReference type="GO" id="GO:0006635">
    <property type="term" value="P:fatty acid beta-oxidation"/>
    <property type="evidence" value="ECO:0007669"/>
    <property type="project" value="UniProtKB-UniRule"/>
</dbReference>
<dbReference type="GO" id="GO:0010124">
    <property type="term" value="P:phenylacetate catabolic process"/>
    <property type="evidence" value="ECO:0007669"/>
    <property type="project" value="TreeGrafter"/>
</dbReference>
<dbReference type="CDD" id="cd00751">
    <property type="entry name" value="thiolase"/>
    <property type="match status" value="1"/>
</dbReference>
<dbReference type="FunFam" id="3.40.47.10:FF:000010">
    <property type="entry name" value="Acetyl-CoA acetyltransferase (Thiolase)"/>
    <property type="match status" value="1"/>
</dbReference>
<dbReference type="Gene3D" id="3.40.47.10">
    <property type="match status" value="2"/>
</dbReference>
<dbReference type="HAMAP" id="MF_01620">
    <property type="entry name" value="FadA"/>
    <property type="match status" value="1"/>
</dbReference>
<dbReference type="InterPro" id="IPR012805">
    <property type="entry name" value="FadA"/>
</dbReference>
<dbReference type="InterPro" id="IPR002155">
    <property type="entry name" value="Thiolase"/>
</dbReference>
<dbReference type="InterPro" id="IPR016039">
    <property type="entry name" value="Thiolase-like"/>
</dbReference>
<dbReference type="InterPro" id="IPR050215">
    <property type="entry name" value="Thiolase-like_sf_Thiolase"/>
</dbReference>
<dbReference type="InterPro" id="IPR020615">
    <property type="entry name" value="Thiolase_acyl_enz_int_AS"/>
</dbReference>
<dbReference type="InterPro" id="IPR020610">
    <property type="entry name" value="Thiolase_AS"/>
</dbReference>
<dbReference type="InterPro" id="IPR020617">
    <property type="entry name" value="Thiolase_C"/>
</dbReference>
<dbReference type="InterPro" id="IPR020613">
    <property type="entry name" value="Thiolase_CS"/>
</dbReference>
<dbReference type="InterPro" id="IPR020616">
    <property type="entry name" value="Thiolase_N"/>
</dbReference>
<dbReference type="NCBIfam" id="TIGR01930">
    <property type="entry name" value="AcCoA-C-Actrans"/>
    <property type="match status" value="1"/>
</dbReference>
<dbReference type="NCBIfam" id="TIGR02445">
    <property type="entry name" value="fadA"/>
    <property type="match status" value="1"/>
</dbReference>
<dbReference type="NCBIfam" id="NF006510">
    <property type="entry name" value="PRK08947.1"/>
    <property type="match status" value="1"/>
</dbReference>
<dbReference type="PANTHER" id="PTHR43853:SF11">
    <property type="entry name" value="3-KETOACYL-COA THIOLASE FADA"/>
    <property type="match status" value="1"/>
</dbReference>
<dbReference type="PANTHER" id="PTHR43853">
    <property type="entry name" value="3-KETOACYL-COA THIOLASE, PEROXISOMAL"/>
    <property type="match status" value="1"/>
</dbReference>
<dbReference type="Pfam" id="PF02803">
    <property type="entry name" value="Thiolase_C"/>
    <property type="match status" value="1"/>
</dbReference>
<dbReference type="Pfam" id="PF00108">
    <property type="entry name" value="Thiolase_N"/>
    <property type="match status" value="1"/>
</dbReference>
<dbReference type="PIRSF" id="PIRSF000429">
    <property type="entry name" value="Ac-CoA_Ac_transf"/>
    <property type="match status" value="1"/>
</dbReference>
<dbReference type="SUPFAM" id="SSF53901">
    <property type="entry name" value="Thiolase-like"/>
    <property type="match status" value="2"/>
</dbReference>
<dbReference type="PROSITE" id="PS00098">
    <property type="entry name" value="THIOLASE_1"/>
    <property type="match status" value="1"/>
</dbReference>
<dbReference type="PROSITE" id="PS00737">
    <property type="entry name" value="THIOLASE_2"/>
    <property type="match status" value="1"/>
</dbReference>
<dbReference type="PROSITE" id="PS00099">
    <property type="entry name" value="THIOLASE_3"/>
    <property type="match status" value="1"/>
</dbReference>
<evidence type="ECO:0000255" key="1">
    <source>
        <dbReference type="HAMAP-Rule" id="MF_01620"/>
    </source>
</evidence>